<evidence type="ECO:0000255" key="1">
    <source>
        <dbReference type="HAMAP-Rule" id="MF_00154"/>
    </source>
</evidence>
<feature type="chain" id="PRO_0000327007" description="Protoheme IX farnesyltransferase">
    <location>
        <begin position="1"/>
        <end position="305"/>
    </location>
</feature>
<feature type="transmembrane region" description="Helical" evidence="1">
    <location>
        <begin position="38"/>
        <end position="58"/>
    </location>
</feature>
<feature type="transmembrane region" description="Helical" evidence="1">
    <location>
        <begin position="60"/>
        <end position="80"/>
    </location>
</feature>
<feature type="transmembrane region" description="Helical" evidence="1">
    <location>
        <begin position="110"/>
        <end position="130"/>
    </location>
</feature>
<feature type="transmembrane region" description="Helical" evidence="1">
    <location>
        <begin position="131"/>
        <end position="151"/>
    </location>
</feature>
<feature type="transmembrane region" description="Helical" evidence="1">
    <location>
        <begin position="161"/>
        <end position="181"/>
    </location>
</feature>
<feature type="transmembrane region" description="Helical" evidence="1">
    <location>
        <begin position="185"/>
        <end position="205"/>
    </location>
</feature>
<feature type="transmembrane region" description="Helical" evidence="1">
    <location>
        <begin position="227"/>
        <end position="247"/>
    </location>
</feature>
<feature type="transmembrane region" description="Helical" evidence="1">
    <location>
        <begin position="249"/>
        <end position="269"/>
    </location>
</feature>
<feature type="transmembrane region" description="Helical" evidence="1">
    <location>
        <begin position="285"/>
        <end position="305"/>
    </location>
</feature>
<gene>
    <name evidence="1" type="primary">ctaB</name>
    <name type="ordered locus">BPUM_1380</name>
</gene>
<organism>
    <name type="scientific">Bacillus pumilus (strain SAFR-032)</name>
    <dbReference type="NCBI Taxonomy" id="315750"/>
    <lineage>
        <taxon>Bacteria</taxon>
        <taxon>Bacillati</taxon>
        <taxon>Bacillota</taxon>
        <taxon>Bacilli</taxon>
        <taxon>Bacillales</taxon>
        <taxon>Bacillaceae</taxon>
        <taxon>Bacillus</taxon>
    </lineage>
</organism>
<reference key="1">
    <citation type="journal article" date="2007" name="PLoS ONE">
        <title>Paradoxical DNA repair and peroxide resistance gene conservation in Bacillus pumilus SAFR-032.</title>
        <authorList>
            <person name="Gioia J."/>
            <person name="Yerrapragada S."/>
            <person name="Qin X."/>
            <person name="Jiang H."/>
            <person name="Igboeli O.C."/>
            <person name="Muzny D."/>
            <person name="Dugan-Rocha S."/>
            <person name="Ding Y."/>
            <person name="Hawes A."/>
            <person name="Liu W."/>
            <person name="Perez L."/>
            <person name="Kovar C."/>
            <person name="Dinh H."/>
            <person name="Lee S."/>
            <person name="Nazareth L."/>
            <person name="Blyth P."/>
            <person name="Holder M."/>
            <person name="Buhay C."/>
            <person name="Tirumalai M.R."/>
            <person name="Liu Y."/>
            <person name="Dasgupta I."/>
            <person name="Bokhetache L."/>
            <person name="Fujita M."/>
            <person name="Karouia F."/>
            <person name="Eswara Moorthy P."/>
            <person name="Siefert J."/>
            <person name="Uzman A."/>
            <person name="Buzumbo P."/>
            <person name="Verma A."/>
            <person name="Zwiya H."/>
            <person name="McWilliams B.D."/>
            <person name="Olowu A."/>
            <person name="Clinkenbeard K.D."/>
            <person name="Newcombe D."/>
            <person name="Golebiewski L."/>
            <person name="Petrosino J.F."/>
            <person name="Nicholson W.L."/>
            <person name="Fox G.E."/>
            <person name="Venkateswaran K."/>
            <person name="Highlander S.K."/>
            <person name="Weinstock G.M."/>
        </authorList>
    </citation>
    <scope>NUCLEOTIDE SEQUENCE [LARGE SCALE GENOMIC DNA]</scope>
    <source>
        <strain>SAFR-032</strain>
    </source>
</reference>
<accession>A8FCU6</accession>
<proteinExistence type="inferred from homology"/>
<keyword id="KW-1003">Cell membrane</keyword>
<keyword id="KW-0350">Heme biosynthesis</keyword>
<keyword id="KW-0472">Membrane</keyword>
<keyword id="KW-0808">Transferase</keyword>
<keyword id="KW-0812">Transmembrane</keyword>
<keyword id="KW-1133">Transmembrane helix</keyword>
<comment type="function">
    <text evidence="1">Converts heme B (protoheme IX) to heme O by substitution of the vinyl group on carbon 2 of heme B porphyrin ring with a hydroxyethyl farnesyl side group.</text>
</comment>
<comment type="catalytic activity">
    <reaction evidence="1">
        <text>heme b + (2E,6E)-farnesyl diphosphate + H2O = Fe(II)-heme o + diphosphate</text>
        <dbReference type="Rhea" id="RHEA:28070"/>
        <dbReference type="ChEBI" id="CHEBI:15377"/>
        <dbReference type="ChEBI" id="CHEBI:33019"/>
        <dbReference type="ChEBI" id="CHEBI:60344"/>
        <dbReference type="ChEBI" id="CHEBI:60530"/>
        <dbReference type="ChEBI" id="CHEBI:175763"/>
        <dbReference type="EC" id="2.5.1.141"/>
    </reaction>
</comment>
<comment type="pathway">
    <text evidence="1">Porphyrin-containing compound metabolism; heme O biosynthesis; heme O from protoheme: step 1/1.</text>
</comment>
<comment type="subunit">
    <text evidence="1">Interacts with CtaA.</text>
</comment>
<comment type="subcellular location">
    <subcellularLocation>
        <location evidence="1">Cell membrane</location>
        <topology evidence="1">Multi-pass membrane protein</topology>
    </subcellularLocation>
</comment>
<comment type="miscellaneous">
    <text evidence="1">Carbon 2 of the heme B porphyrin ring is defined according to the Fischer nomenclature.</text>
</comment>
<comment type="similarity">
    <text evidence="1">Belongs to the UbiA prenyltransferase family. Protoheme IX farnesyltransferase subfamily.</text>
</comment>
<protein>
    <recommendedName>
        <fullName evidence="1">Protoheme IX farnesyltransferase</fullName>
        <ecNumber evidence="1">2.5.1.141</ecNumber>
    </recommendedName>
    <alternativeName>
        <fullName evidence="1">Heme B farnesyltransferase</fullName>
    </alternativeName>
    <alternativeName>
        <fullName evidence="1">Heme O synthase</fullName>
    </alternativeName>
</protein>
<dbReference type="EC" id="2.5.1.141" evidence="1"/>
<dbReference type="EMBL" id="CP000813">
    <property type="protein sequence ID" value="ABV62063.1"/>
    <property type="molecule type" value="Genomic_DNA"/>
</dbReference>
<dbReference type="RefSeq" id="WP_012009843.1">
    <property type="nucleotide sequence ID" value="NC_009848.4"/>
</dbReference>
<dbReference type="SMR" id="A8FCU6"/>
<dbReference type="STRING" id="315750.BPUM_1380"/>
<dbReference type="GeneID" id="5620643"/>
<dbReference type="KEGG" id="bpu:BPUM_1380"/>
<dbReference type="eggNOG" id="COG0109">
    <property type="taxonomic scope" value="Bacteria"/>
</dbReference>
<dbReference type="HOGENOM" id="CLU_029631_0_0_9"/>
<dbReference type="OrthoDB" id="9814417at2"/>
<dbReference type="UniPathway" id="UPA00834">
    <property type="reaction ID" value="UER00712"/>
</dbReference>
<dbReference type="Proteomes" id="UP000001355">
    <property type="component" value="Chromosome"/>
</dbReference>
<dbReference type="GO" id="GO:0005886">
    <property type="term" value="C:plasma membrane"/>
    <property type="evidence" value="ECO:0007669"/>
    <property type="project" value="UniProtKB-SubCell"/>
</dbReference>
<dbReference type="GO" id="GO:0008495">
    <property type="term" value="F:protoheme IX farnesyltransferase activity"/>
    <property type="evidence" value="ECO:0007669"/>
    <property type="project" value="UniProtKB-UniRule"/>
</dbReference>
<dbReference type="GO" id="GO:0048034">
    <property type="term" value="P:heme O biosynthetic process"/>
    <property type="evidence" value="ECO:0007669"/>
    <property type="project" value="UniProtKB-UniRule"/>
</dbReference>
<dbReference type="CDD" id="cd13957">
    <property type="entry name" value="PT_UbiA_Cox10"/>
    <property type="match status" value="1"/>
</dbReference>
<dbReference type="FunFam" id="1.10.357.140:FF:000001">
    <property type="entry name" value="Protoheme IX farnesyltransferase"/>
    <property type="match status" value="1"/>
</dbReference>
<dbReference type="Gene3D" id="1.10.357.140">
    <property type="entry name" value="UbiA prenyltransferase"/>
    <property type="match status" value="1"/>
</dbReference>
<dbReference type="HAMAP" id="MF_00154">
    <property type="entry name" value="CyoE_CtaB"/>
    <property type="match status" value="1"/>
</dbReference>
<dbReference type="InterPro" id="IPR006369">
    <property type="entry name" value="Protohaem_IX_farnesylTrfase"/>
</dbReference>
<dbReference type="InterPro" id="IPR000537">
    <property type="entry name" value="UbiA_prenyltransferase"/>
</dbReference>
<dbReference type="InterPro" id="IPR030470">
    <property type="entry name" value="UbiA_prenylTrfase_CS"/>
</dbReference>
<dbReference type="InterPro" id="IPR044878">
    <property type="entry name" value="UbiA_sf"/>
</dbReference>
<dbReference type="NCBIfam" id="TIGR01473">
    <property type="entry name" value="cyoE_ctaB"/>
    <property type="match status" value="1"/>
</dbReference>
<dbReference type="PANTHER" id="PTHR43448">
    <property type="entry name" value="PROTOHEME IX FARNESYLTRANSFERASE, MITOCHONDRIAL"/>
    <property type="match status" value="1"/>
</dbReference>
<dbReference type="PANTHER" id="PTHR43448:SF2">
    <property type="entry name" value="PROTOHEME IX FARNESYLTRANSFERASE, MITOCHONDRIAL"/>
    <property type="match status" value="1"/>
</dbReference>
<dbReference type="Pfam" id="PF01040">
    <property type="entry name" value="UbiA"/>
    <property type="match status" value="1"/>
</dbReference>
<dbReference type="PROSITE" id="PS00943">
    <property type="entry name" value="UBIA"/>
    <property type="match status" value="1"/>
</dbReference>
<name>COXX_BACP2</name>
<sequence length="305" mass="33824">MANSKTAAEAAIHGQIEKTTAWKDFLALIKMGIVNSNFITTFTGMWLAFYFTGMSFLGNLDIVLLTMIGSSLIIAGSCAINNAFDRDIDILMERTKTRPTVTGKIQPGQAYAFGILLVVLGLIMLLMTTVTSAVIGFIGVFTYAVLYTMWSKRHYTINTVIGSVSGAVPPLIGWTAVTGTIDTTAWVLFMIMFIWQIPHFLSLAIKKTEDYRKAGIPMLPVVYGFEVTKRQIIIWTACLLPLPFFLGGLGWPIVALGTLLNIGWLVIGLMGFKMKDVMKWSTLMFVYSLNYLTIFFVAMIIITLF</sequence>